<reference key="1">
    <citation type="journal article" date="2004" name="Nat. Genet.">
        <title>Evidence in the Legionella pneumophila genome for exploitation of host cell functions and high genome plasticity.</title>
        <authorList>
            <person name="Cazalet C."/>
            <person name="Rusniok C."/>
            <person name="Brueggemann H."/>
            <person name="Zidane N."/>
            <person name="Magnier A."/>
            <person name="Ma L."/>
            <person name="Tichit M."/>
            <person name="Jarraud S."/>
            <person name="Bouchier C."/>
            <person name="Vandenesch F."/>
            <person name="Kunst F."/>
            <person name="Etienne J."/>
            <person name="Glaser P."/>
            <person name="Buchrieser C."/>
        </authorList>
    </citation>
    <scope>NUCLEOTIDE SEQUENCE [LARGE SCALE GENOMIC DNA]</scope>
    <source>
        <strain>Paris</strain>
    </source>
</reference>
<dbReference type="EMBL" id="CR628336">
    <property type="protein sequence ID" value="CAH13054.1"/>
    <property type="molecule type" value="Genomic_DNA"/>
</dbReference>
<dbReference type="RefSeq" id="WP_010947644.1">
    <property type="nucleotide sequence ID" value="NC_006368.1"/>
</dbReference>
<dbReference type="SMR" id="Q5X3X9"/>
<dbReference type="KEGG" id="lpp:lpp1902"/>
<dbReference type="LegioList" id="lpp1902"/>
<dbReference type="HOGENOM" id="CLU_170994_0_0_6"/>
<dbReference type="GO" id="GO:0005829">
    <property type="term" value="C:cytosol"/>
    <property type="evidence" value="ECO:0007669"/>
    <property type="project" value="TreeGrafter"/>
</dbReference>
<dbReference type="GO" id="GO:0005506">
    <property type="term" value="F:iron ion binding"/>
    <property type="evidence" value="ECO:0007669"/>
    <property type="project" value="UniProtKB-UniRule"/>
</dbReference>
<dbReference type="GO" id="GO:0034599">
    <property type="term" value="P:cellular response to oxidative stress"/>
    <property type="evidence" value="ECO:0007669"/>
    <property type="project" value="TreeGrafter"/>
</dbReference>
<dbReference type="FunFam" id="1.10.3880.10:FF:000001">
    <property type="entry name" value="Probable Fe(2+)-trafficking protein"/>
    <property type="match status" value="1"/>
</dbReference>
<dbReference type="Gene3D" id="1.10.3880.10">
    <property type="entry name" value="Fe(II) trafficking protein YggX"/>
    <property type="match status" value="1"/>
</dbReference>
<dbReference type="HAMAP" id="MF_00686">
    <property type="entry name" value="Fe_traffic_YggX"/>
    <property type="match status" value="1"/>
</dbReference>
<dbReference type="InterPro" id="IPR007457">
    <property type="entry name" value="Fe_traffick_prot_YggX"/>
</dbReference>
<dbReference type="InterPro" id="IPR036766">
    <property type="entry name" value="Fe_traffick_prot_YggX_sf"/>
</dbReference>
<dbReference type="NCBIfam" id="NF003817">
    <property type="entry name" value="PRK05408.1"/>
    <property type="match status" value="1"/>
</dbReference>
<dbReference type="PANTHER" id="PTHR36965">
    <property type="entry name" value="FE(2+)-TRAFFICKING PROTEIN-RELATED"/>
    <property type="match status" value="1"/>
</dbReference>
<dbReference type="PANTHER" id="PTHR36965:SF1">
    <property type="entry name" value="FE(2+)-TRAFFICKING PROTEIN-RELATED"/>
    <property type="match status" value="1"/>
</dbReference>
<dbReference type="Pfam" id="PF04362">
    <property type="entry name" value="Iron_traffic"/>
    <property type="match status" value="1"/>
</dbReference>
<dbReference type="PIRSF" id="PIRSF029827">
    <property type="entry name" value="Fe_traffic_YggX"/>
    <property type="match status" value="1"/>
</dbReference>
<dbReference type="SUPFAM" id="SSF111148">
    <property type="entry name" value="YggX-like"/>
    <property type="match status" value="1"/>
</dbReference>
<comment type="function">
    <text evidence="1">Could be a mediator in iron transactions between iron acquisition and iron-requiring processes, such as synthesis and/or repair of Fe-S clusters in biosynthetic enzymes.</text>
</comment>
<comment type="similarity">
    <text evidence="1">Belongs to the Fe(2+)-trafficking protein family.</text>
</comment>
<feature type="chain" id="PRO_0000214486" description="Probable Fe(2+)-trafficking protein">
    <location>
        <begin position="1"/>
        <end position="89"/>
    </location>
</feature>
<keyword id="KW-0408">Iron</keyword>
<name>FETP_LEGPA</name>
<accession>Q5X3X9</accession>
<protein>
    <recommendedName>
        <fullName evidence="1">Probable Fe(2+)-trafficking protein</fullName>
    </recommendedName>
</protein>
<sequence>MSRTVFCCKLKQEAEGLEKQPFPGELGKKVFNEVSKQAWNMWLSHQTMLINEYRLNLIEARAREFLKEEMQKYFFGEGSEKPSGYKEIK</sequence>
<evidence type="ECO:0000255" key="1">
    <source>
        <dbReference type="HAMAP-Rule" id="MF_00686"/>
    </source>
</evidence>
<proteinExistence type="inferred from homology"/>
<gene>
    <name type="ordered locus">lpp1902</name>
</gene>
<organism>
    <name type="scientific">Legionella pneumophila (strain Paris)</name>
    <dbReference type="NCBI Taxonomy" id="297246"/>
    <lineage>
        <taxon>Bacteria</taxon>
        <taxon>Pseudomonadati</taxon>
        <taxon>Pseudomonadota</taxon>
        <taxon>Gammaproteobacteria</taxon>
        <taxon>Legionellales</taxon>
        <taxon>Legionellaceae</taxon>
        <taxon>Legionella</taxon>
    </lineage>
</organism>